<proteinExistence type="evidence at protein level"/>
<comment type="function">
    <text evidence="2 6 7 8 9 10 11 12">Cell adhesion molecule involved in the establishment and/or maintenance of cell integrity. Involved in the formation and regulation of the tight junction (TJ) paracellular permeability barrier in epithelial cells (PubMed:16188940). Plays a role in VAMP3-mediated vesicular transport and recycling of different receptor molecules through its interaction with VAMP3 (PubMed:20057356). Plays a role in the regulation of cell shape and movement by modulating the Rho-family GTPase activity through its interaction with ARHGEF25/GEFT (PubMed:18541910). Induces primordial adhesive contact and aggregation of epithelial cells in a Ca(2+)-independent manner. Also involved in striated muscle regeneration and repair and in the regulation of cell spreading (PubMed:11839816). Important for the maintenance of cardiac function. Plays a regulatory function in heart rate dynamics mediated, at least in part, through cAMP-binding and, probably, by increasing cell surface expression of the potassium channel KCNK2 and enhancing current density (PubMed:26642364). Is a caveolae-associated protein important for the preservation of caveolae structural and functional integrity as well as for heart protection against ischemia injury (PubMed:24066022).</text>
</comment>
<comment type="subunit">
    <text evidence="3 8 9 10 12 13">Homodimer. Homodimerization requires the C-terminus cytoplasmic region (By similarity). Interacts (via the C-terminus cytoplasmic tail) with TJP1. Interacts (via the C-terminus cytoplasmic tail) with ARHGEF25/GEFT (via the DH domain). Interacts (via the C-terminus cytoplasmic tail) with VAMP3. Interacts with KCNK2; the interaction enhances KCNK2 surface expression and is inhibited by cAMP (PubMed:22354168, PubMed:26642364). Interacts with CAV3 (PubMed:24066022).</text>
</comment>
<comment type="interaction">
    <interactant intactId="EBI-7705661">
        <id>Q9ES83</id>
    </interactant>
    <interactant intactId="EBI-15708245">
        <id>Q9CWR0</id>
        <label>Arhgef25</label>
    </interactant>
    <organismsDiffer>false</organismsDiffer>
    <experiments>2</experiments>
</comment>
<comment type="interaction">
    <interactant intactId="EBI-7705661">
        <id>Q9ES83</id>
    </interactant>
    <interactant intactId="EBI-7705696">
        <id>P63025</id>
        <label>Vamp3</label>
    </interactant>
    <organismsDiffer>true</organismsDiffer>
    <experiments>3</experiments>
</comment>
<comment type="subcellular location">
    <subcellularLocation>
        <location evidence="2">Lateral cell membrane</location>
    </subcellularLocation>
    <subcellularLocation>
        <location evidence="8">Cell junction</location>
        <location evidence="8">Tight junction</location>
    </subcellularLocation>
    <subcellularLocation>
        <location evidence="11">Membrane</location>
        <topology evidence="14">Multi-pass membrane protein</topology>
    </subcellularLocation>
    <subcellularLocation>
        <location evidence="12">Cell membrane</location>
        <location evidence="12">Sarcolemma</location>
    </subcellularLocation>
    <subcellularLocation>
        <location evidence="12">Membrane</location>
        <location evidence="12">Caveola</location>
    </subcellularLocation>
    <text evidence="8 10">Its movement from the cytoplasm to membrane is an early event occurring concurrently with cell-cell contact. Detected at cell-cell contact but never observed at the free surface of epithelial cells (By similarity). Colocalizes in epithelial cells with OCLN and TJP1 in an apical-lateral position within the z axis. Colocalizes with VAMP3 at the cell-cell contact in cardiac and skeletal muscle.</text>
</comment>
<comment type="tissue specificity">
    <text evidence="6 7 8 9">Expressed in epithelial cells, skeletal muscle, heart and intestinal smooth muscle (at protein level). Expressed in fetal and adult heart and skeletal muscle.</text>
</comment>
<comment type="developmental stage">
    <text evidence="6 7">Expressed in the mesoderm of the cardiac crescent at 9.5 dpc. Expressed in cardiac myocytes of the sinoatrial compartment and some restricted areas of the dorsal part of the ventricle chambers at 10.5 dpc and 12.5 dpc. Expressed in branchial arches, myotome and in a posterior domain in the limb at 10.5 dpc. Expressed in the heart, mainly in the compact layer myocardium, peridigital mesenchyme, the somites of the tail bud, the smooth muscle cells of the trachea and the developing bronchial tree, the smooth muscle cells lining the digestive tract, the dorsal root ganglia and the pancreas anlage at 13.5 dpc (at protein level). Expressed in the sinoatrial compartment and some restricted areas in the dorsal part of the ventricle at 9.5 dpc, 10.5 dpc and 11.5 dpc. At 12.5 dpc, expression was observed in the ventral half of the ventricle where it was limited to the subepicardial compact layer.</text>
</comment>
<comment type="disruption phenotype">
    <text evidence="7 11 12">Skeletal muscle regeneration appears to be less efficient and delayed (PubMed:11839816). Knockout mice are deficient to adapt heart rate to physiological stress, this deficiency develops in older mice. They show severe sinus node dysfunction with long pauses and intercurrent periods of normal synus rhythm. The sinus node structure is abnormal with a loss of pacemaker tissue from the inferior part of the sinus node and a compact structure of the superior sinus node (PubMed:22354168). They have inpaired functional recovery after ischemia/reperfusion injury (PubMed:24066022).</text>
</comment>
<comment type="similarity">
    <text evidence="14">Belongs to the popeye family.</text>
</comment>
<protein>
    <recommendedName>
        <fullName>Popeye domain-containing protein 1</fullName>
        <shortName>Popeye protein 1</shortName>
    </recommendedName>
    <alternativeName>
        <fullName evidence="15">Blood vessel epicardial substance</fullName>
        <shortName>mBVES</shortName>
    </alternativeName>
</protein>
<name>POPD1_MOUSE</name>
<dbReference type="EMBL" id="AF204174">
    <property type="protein sequence ID" value="AAG23407.1"/>
    <property type="molecule type" value="mRNA"/>
</dbReference>
<dbReference type="EMBL" id="AF124510">
    <property type="status" value="NOT_ANNOTATED_CDS"/>
    <property type="molecule type" value="mRNA"/>
</dbReference>
<dbReference type="EMBL" id="BC132018">
    <property type="protein sequence ID" value="AAI32019.1"/>
    <property type="molecule type" value="mRNA"/>
</dbReference>
<dbReference type="EMBL" id="BC132044">
    <property type="protein sequence ID" value="AAI32045.1"/>
    <property type="molecule type" value="mRNA"/>
</dbReference>
<dbReference type="EMBL" id="AK046765">
    <property type="protein sequence ID" value="BAC32859.1"/>
    <property type="molecule type" value="mRNA"/>
</dbReference>
<dbReference type="CCDS" id="CCDS23828.1"/>
<dbReference type="RefSeq" id="NP_001415820.1">
    <property type="nucleotide sequence ID" value="NM_001428891.1"/>
</dbReference>
<dbReference type="RefSeq" id="NP_077247.1">
    <property type="nucleotide sequence ID" value="NM_024285.3"/>
</dbReference>
<dbReference type="RefSeq" id="XP_006512799.1">
    <property type="nucleotide sequence ID" value="XM_006512736.3"/>
</dbReference>
<dbReference type="RefSeq" id="XP_006512800.1">
    <property type="nucleotide sequence ID" value="XM_006512737.2"/>
</dbReference>
<dbReference type="SMR" id="Q9ES83"/>
<dbReference type="DIP" id="DIP-46118N"/>
<dbReference type="FunCoup" id="Q9ES83">
    <property type="interactions" value="462"/>
</dbReference>
<dbReference type="IntAct" id="Q9ES83">
    <property type="interactions" value="3"/>
</dbReference>
<dbReference type="MINT" id="Q9ES83"/>
<dbReference type="STRING" id="10090.ENSMUSP00000093382"/>
<dbReference type="GlyCosmos" id="Q9ES83">
    <property type="glycosylation" value="2 sites, No reported glycans"/>
</dbReference>
<dbReference type="GlyGen" id="Q9ES83">
    <property type="glycosylation" value="3 sites, 1 O-linked glycan (1 site)"/>
</dbReference>
<dbReference type="iPTMnet" id="Q9ES83"/>
<dbReference type="PhosphoSitePlus" id="Q9ES83"/>
<dbReference type="PaxDb" id="10090-ENSMUSP00000093382"/>
<dbReference type="PeptideAtlas" id="Q9ES83"/>
<dbReference type="ProteomicsDB" id="289867"/>
<dbReference type="Antibodypedia" id="3082">
    <property type="antibodies" value="220 antibodies from 31 providers"/>
</dbReference>
<dbReference type="DNASU" id="23828"/>
<dbReference type="Ensembl" id="ENSMUST00000095715.5">
    <property type="protein sequence ID" value="ENSMUSP00000093382.4"/>
    <property type="gene ID" value="ENSMUSG00000071317.5"/>
</dbReference>
<dbReference type="GeneID" id="23828"/>
<dbReference type="KEGG" id="mmu:23828"/>
<dbReference type="UCSC" id="uc007ezz.1">
    <property type="organism name" value="mouse"/>
</dbReference>
<dbReference type="AGR" id="MGI:1346013"/>
<dbReference type="CTD" id="11149"/>
<dbReference type="MGI" id="MGI:1346013">
    <property type="gene designation" value="Bves"/>
</dbReference>
<dbReference type="VEuPathDB" id="HostDB:ENSMUSG00000071317"/>
<dbReference type="eggNOG" id="ENOG502QRV2">
    <property type="taxonomic scope" value="Eukaryota"/>
</dbReference>
<dbReference type="GeneTree" id="ENSGT00390000002563"/>
<dbReference type="HOGENOM" id="CLU_048494_0_0_1"/>
<dbReference type="InParanoid" id="Q9ES83"/>
<dbReference type="OMA" id="SCQEWEQ"/>
<dbReference type="OrthoDB" id="425611at2759"/>
<dbReference type="PhylomeDB" id="Q9ES83"/>
<dbReference type="TreeFam" id="TF326644"/>
<dbReference type="BioGRID-ORCS" id="23828">
    <property type="hits" value="0 hits in 76 CRISPR screens"/>
</dbReference>
<dbReference type="PRO" id="PR:Q9ES83"/>
<dbReference type="Proteomes" id="UP000000589">
    <property type="component" value="Chromosome 10"/>
</dbReference>
<dbReference type="RNAct" id="Q9ES83">
    <property type="molecule type" value="protein"/>
</dbReference>
<dbReference type="Bgee" id="ENSMUSG00000071317">
    <property type="expression patterns" value="Expressed in interventricular septum and 118 other cell types or tissues"/>
</dbReference>
<dbReference type="GO" id="GO:0005923">
    <property type="term" value="C:bicellular tight junction"/>
    <property type="evidence" value="ECO:0000314"/>
    <property type="project" value="UniProtKB"/>
</dbReference>
<dbReference type="GO" id="GO:0005901">
    <property type="term" value="C:caveola"/>
    <property type="evidence" value="ECO:0000314"/>
    <property type="project" value="UniProtKB"/>
</dbReference>
<dbReference type="GO" id="GO:0031253">
    <property type="term" value="C:cell projection membrane"/>
    <property type="evidence" value="ECO:0000314"/>
    <property type="project" value="BHF-UCL"/>
</dbReference>
<dbReference type="GO" id="GO:0016328">
    <property type="term" value="C:lateral plasma membrane"/>
    <property type="evidence" value="ECO:0000314"/>
    <property type="project" value="UniProtKB"/>
</dbReference>
<dbReference type="GO" id="GO:0016020">
    <property type="term" value="C:membrane"/>
    <property type="evidence" value="ECO:0000314"/>
    <property type="project" value="UniProtKB"/>
</dbReference>
<dbReference type="GO" id="GO:0005886">
    <property type="term" value="C:plasma membrane"/>
    <property type="evidence" value="ECO:0000314"/>
    <property type="project" value="UniProtKB"/>
</dbReference>
<dbReference type="GO" id="GO:0042383">
    <property type="term" value="C:sarcolemma"/>
    <property type="evidence" value="ECO:0000314"/>
    <property type="project" value="UniProtKB"/>
</dbReference>
<dbReference type="GO" id="GO:0030552">
    <property type="term" value="F:cAMP binding"/>
    <property type="evidence" value="ECO:0000314"/>
    <property type="project" value="MGI"/>
</dbReference>
<dbReference type="GO" id="GO:0005198">
    <property type="term" value="F:structural molecule activity"/>
    <property type="evidence" value="ECO:0000250"/>
    <property type="project" value="UniProtKB"/>
</dbReference>
<dbReference type="GO" id="GO:0060973">
    <property type="term" value="P:cell migration involved in heart development"/>
    <property type="evidence" value="ECO:0000315"/>
    <property type="project" value="BHF-UCL"/>
</dbReference>
<dbReference type="GO" id="GO:0090136">
    <property type="term" value="P:epithelial cell-cell adhesion"/>
    <property type="evidence" value="ECO:0000250"/>
    <property type="project" value="UniProtKB"/>
</dbReference>
<dbReference type="GO" id="GO:0007507">
    <property type="term" value="P:heart development"/>
    <property type="evidence" value="ECO:0000250"/>
    <property type="project" value="UniProtKB"/>
</dbReference>
<dbReference type="GO" id="GO:0002244">
    <property type="term" value="P:hematopoietic progenitor cell differentiation"/>
    <property type="evidence" value="ECO:0000316"/>
    <property type="project" value="MGI"/>
</dbReference>
<dbReference type="GO" id="GO:0040017">
    <property type="term" value="P:positive regulation of locomotion"/>
    <property type="evidence" value="ECO:0000314"/>
    <property type="project" value="UniProtKB"/>
</dbReference>
<dbReference type="GO" id="GO:0001921">
    <property type="term" value="P:positive regulation of receptor recycling"/>
    <property type="evidence" value="ECO:0000314"/>
    <property type="project" value="UniProtKB"/>
</dbReference>
<dbReference type="GO" id="GO:0008360">
    <property type="term" value="P:regulation of cell shape"/>
    <property type="evidence" value="ECO:0000314"/>
    <property type="project" value="UniProtKB"/>
</dbReference>
<dbReference type="GO" id="GO:2001135">
    <property type="term" value="P:regulation of endocytic recycling"/>
    <property type="evidence" value="ECO:0000315"/>
    <property type="project" value="BHF-UCL"/>
</dbReference>
<dbReference type="GO" id="GO:0043087">
    <property type="term" value="P:regulation of GTPase activity"/>
    <property type="evidence" value="ECO:0000314"/>
    <property type="project" value="UniProtKB"/>
</dbReference>
<dbReference type="GO" id="GO:0002027">
    <property type="term" value="P:regulation of heart rate"/>
    <property type="evidence" value="ECO:0000315"/>
    <property type="project" value="MGI"/>
</dbReference>
<dbReference type="GO" id="GO:0042391">
    <property type="term" value="P:regulation of membrane potential"/>
    <property type="evidence" value="ECO:0000316"/>
    <property type="project" value="MGI"/>
</dbReference>
<dbReference type="GO" id="GO:0002931">
    <property type="term" value="P:response to ischemia"/>
    <property type="evidence" value="ECO:0000315"/>
    <property type="project" value="UniProtKB"/>
</dbReference>
<dbReference type="GO" id="GO:0060931">
    <property type="term" value="P:sinoatrial node cell development"/>
    <property type="evidence" value="ECO:0000315"/>
    <property type="project" value="MGI"/>
</dbReference>
<dbReference type="GO" id="GO:0007519">
    <property type="term" value="P:skeletal muscle tissue development"/>
    <property type="evidence" value="ECO:0000250"/>
    <property type="project" value="UniProtKB"/>
</dbReference>
<dbReference type="GO" id="GO:0034446">
    <property type="term" value="P:substrate adhesion-dependent cell spreading"/>
    <property type="evidence" value="ECO:0000314"/>
    <property type="project" value="UniProtKB"/>
</dbReference>
<dbReference type="GO" id="GO:0048278">
    <property type="term" value="P:vesicle docking"/>
    <property type="evidence" value="ECO:0000315"/>
    <property type="project" value="BHF-UCL"/>
</dbReference>
<dbReference type="GO" id="GO:0016192">
    <property type="term" value="P:vesicle-mediated transport"/>
    <property type="evidence" value="ECO:0000314"/>
    <property type="project" value="UniProtKB"/>
</dbReference>
<dbReference type="FunFam" id="2.60.120.10:FF:000166">
    <property type="entry name" value="blood vessel epicardial substance isoform X1"/>
    <property type="match status" value="1"/>
</dbReference>
<dbReference type="InterPro" id="IPR018490">
    <property type="entry name" value="cNMP-bd_dom_sf"/>
</dbReference>
<dbReference type="InterPro" id="IPR006916">
    <property type="entry name" value="POPDC1-3"/>
</dbReference>
<dbReference type="InterPro" id="IPR055272">
    <property type="entry name" value="POPDC1-3_dom"/>
</dbReference>
<dbReference type="PANTHER" id="PTHR12101:SF17">
    <property type="entry name" value="BLOOD VESSEL EPICARDIAL SUBSTANCE"/>
    <property type="match status" value="1"/>
</dbReference>
<dbReference type="PANTHER" id="PTHR12101">
    <property type="entry name" value="POPEYE DOMAIN CONTAINING PROTEIN"/>
    <property type="match status" value="1"/>
</dbReference>
<dbReference type="Pfam" id="PF04831">
    <property type="entry name" value="POPDC1-3"/>
    <property type="match status" value="1"/>
</dbReference>
<dbReference type="SUPFAM" id="SSF51206">
    <property type="entry name" value="cAMP-binding domain-like"/>
    <property type="match status" value="1"/>
</dbReference>
<keyword id="KW-0114">cAMP</keyword>
<keyword id="KW-0116">cAMP-binding</keyword>
<keyword id="KW-0130">Cell adhesion</keyword>
<keyword id="KW-0965">Cell junction</keyword>
<keyword id="KW-1003">Cell membrane</keyword>
<keyword id="KW-0217">Developmental protein</keyword>
<keyword id="KW-0325">Glycoprotein</keyword>
<keyword id="KW-0472">Membrane</keyword>
<keyword id="KW-0547">Nucleotide-binding</keyword>
<keyword id="KW-0597">Phosphoprotein</keyword>
<keyword id="KW-1185">Reference proteome</keyword>
<keyword id="KW-0796">Tight junction</keyword>
<keyword id="KW-0812">Transmembrane</keyword>
<keyword id="KW-1133">Transmembrane helix</keyword>
<accession>Q9ES83</accession>
<accession>A2RS91</accession>
<accession>Q8C8L3</accession>
<reference key="1">
    <citation type="journal article" date="2000" name="Dev. Biol.">
        <title>Isolation and characterization of the novel popeye gene family expressed in skeletal muscle and heart.</title>
        <authorList>
            <person name="Andree B."/>
            <person name="Hillemann T."/>
            <person name="Kessler-Icekson G."/>
            <person name="Schmitt-John T."/>
            <person name="Jockusch H."/>
            <person name="Arnold H.-H."/>
            <person name="Brand T."/>
        </authorList>
    </citation>
    <scope>NUCLEOTIDE SEQUENCE [MRNA]</scope>
    <scope>POSSIBLE FUNCTION</scope>
    <scope>DEVELOPMENTAL STAGE</scope>
    <scope>TISSUE SPECIFICITY</scope>
</reference>
<reference key="2">
    <citation type="journal article" date="2004" name="Genome Res.">
        <title>The status, quality, and expansion of the NIH full-length cDNA project: the Mammalian Gene Collection (MGC).</title>
        <authorList>
            <consortium name="The MGC Project Team"/>
        </authorList>
    </citation>
    <scope>NUCLEOTIDE SEQUENCE [LARGE SCALE MRNA]</scope>
    <source>
        <tissue>Brain</tissue>
    </source>
</reference>
<reference key="3">
    <citation type="journal article" date="1999" name="Dev. Biol.">
        <title>bves: a novel gene expressed during coronary blood vessel development.</title>
        <authorList>
            <person name="Reese D.E."/>
            <person name="Zavaljevski M."/>
            <person name="Streiff N.L."/>
            <person name="Bader D."/>
        </authorList>
    </citation>
    <scope>NUCLEOTIDE SEQUENCE [MRNA] OF 4-358</scope>
</reference>
<reference key="4">
    <citation type="journal article" date="2005" name="Science">
        <title>The transcriptional landscape of the mammalian genome.</title>
        <authorList>
            <person name="Carninci P."/>
            <person name="Kasukawa T."/>
            <person name="Katayama S."/>
            <person name="Gough J."/>
            <person name="Frith M.C."/>
            <person name="Maeda N."/>
            <person name="Oyama R."/>
            <person name="Ravasi T."/>
            <person name="Lenhard B."/>
            <person name="Wells C."/>
            <person name="Kodzius R."/>
            <person name="Shimokawa K."/>
            <person name="Bajic V.B."/>
            <person name="Brenner S.E."/>
            <person name="Batalov S."/>
            <person name="Forrest A.R."/>
            <person name="Zavolan M."/>
            <person name="Davis M.J."/>
            <person name="Wilming L.G."/>
            <person name="Aidinis V."/>
            <person name="Allen J.E."/>
            <person name="Ambesi-Impiombato A."/>
            <person name="Apweiler R."/>
            <person name="Aturaliya R.N."/>
            <person name="Bailey T.L."/>
            <person name="Bansal M."/>
            <person name="Baxter L."/>
            <person name="Beisel K.W."/>
            <person name="Bersano T."/>
            <person name="Bono H."/>
            <person name="Chalk A.M."/>
            <person name="Chiu K.P."/>
            <person name="Choudhary V."/>
            <person name="Christoffels A."/>
            <person name="Clutterbuck D.R."/>
            <person name="Crowe M.L."/>
            <person name="Dalla E."/>
            <person name="Dalrymple B.P."/>
            <person name="de Bono B."/>
            <person name="Della Gatta G."/>
            <person name="di Bernardo D."/>
            <person name="Down T."/>
            <person name="Engstrom P."/>
            <person name="Fagiolini M."/>
            <person name="Faulkner G."/>
            <person name="Fletcher C.F."/>
            <person name="Fukushima T."/>
            <person name="Furuno M."/>
            <person name="Futaki S."/>
            <person name="Gariboldi M."/>
            <person name="Georgii-Hemming P."/>
            <person name="Gingeras T.R."/>
            <person name="Gojobori T."/>
            <person name="Green R.E."/>
            <person name="Gustincich S."/>
            <person name="Harbers M."/>
            <person name="Hayashi Y."/>
            <person name="Hensch T.K."/>
            <person name="Hirokawa N."/>
            <person name="Hill D."/>
            <person name="Huminiecki L."/>
            <person name="Iacono M."/>
            <person name="Ikeo K."/>
            <person name="Iwama A."/>
            <person name="Ishikawa T."/>
            <person name="Jakt M."/>
            <person name="Kanapin A."/>
            <person name="Katoh M."/>
            <person name="Kawasawa Y."/>
            <person name="Kelso J."/>
            <person name="Kitamura H."/>
            <person name="Kitano H."/>
            <person name="Kollias G."/>
            <person name="Krishnan S.P."/>
            <person name="Kruger A."/>
            <person name="Kummerfeld S.K."/>
            <person name="Kurochkin I.V."/>
            <person name="Lareau L.F."/>
            <person name="Lazarevic D."/>
            <person name="Lipovich L."/>
            <person name="Liu J."/>
            <person name="Liuni S."/>
            <person name="McWilliam S."/>
            <person name="Madan Babu M."/>
            <person name="Madera M."/>
            <person name="Marchionni L."/>
            <person name="Matsuda H."/>
            <person name="Matsuzawa S."/>
            <person name="Miki H."/>
            <person name="Mignone F."/>
            <person name="Miyake S."/>
            <person name="Morris K."/>
            <person name="Mottagui-Tabar S."/>
            <person name="Mulder N."/>
            <person name="Nakano N."/>
            <person name="Nakauchi H."/>
            <person name="Ng P."/>
            <person name="Nilsson R."/>
            <person name="Nishiguchi S."/>
            <person name="Nishikawa S."/>
            <person name="Nori F."/>
            <person name="Ohara O."/>
            <person name="Okazaki Y."/>
            <person name="Orlando V."/>
            <person name="Pang K.C."/>
            <person name="Pavan W.J."/>
            <person name="Pavesi G."/>
            <person name="Pesole G."/>
            <person name="Petrovsky N."/>
            <person name="Piazza S."/>
            <person name="Reed J."/>
            <person name="Reid J.F."/>
            <person name="Ring B.Z."/>
            <person name="Ringwald M."/>
            <person name="Rost B."/>
            <person name="Ruan Y."/>
            <person name="Salzberg S.L."/>
            <person name="Sandelin A."/>
            <person name="Schneider C."/>
            <person name="Schoenbach C."/>
            <person name="Sekiguchi K."/>
            <person name="Semple C.A."/>
            <person name="Seno S."/>
            <person name="Sessa L."/>
            <person name="Sheng Y."/>
            <person name="Shibata Y."/>
            <person name="Shimada H."/>
            <person name="Shimada K."/>
            <person name="Silva D."/>
            <person name="Sinclair B."/>
            <person name="Sperling S."/>
            <person name="Stupka E."/>
            <person name="Sugiura K."/>
            <person name="Sultana R."/>
            <person name="Takenaka Y."/>
            <person name="Taki K."/>
            <person name="Tammoja K."/>
            <person name="Tan S.L."/>
            <person name="Tang S."/>
            <person name="Taylor M.S."/>
            <person name="Tegner J."/>
            <person name="Teichmann S.A."/>
            <person name="Ueda H.R."/>
            <person name="van Nimwegen E."/>
            <person name="Verardo R."/>
            <person name="Wei C.L."/>
            <person name="Yagi K."/>
            <person name="Yamanishi H."/>
            <person name="Zabarovsky E."/>
            <person name="Zhu S."/>
            <person name="Zimmer A."/>
            <person name="Hide W."/>
            <person name="Bult C."/>
            <person name="Grimmond S.M."/>
            <person name="Teasdale R.D."/>
            <person name="Liu E.T."/>
            <person name="Brusic V."/>
            <person name="Quackenbush J."/>
            <person name="Wahlestedt C."/>
            <person name="Mattick J.S."/>
            <person name="Hume D.A."/>
            <person name="Kai C."/>
            <person name="Sasaki D."/>
            <person name="Tomaru Y."/>
            <person name="Fukuda S."/>
            <person name="Kanamori-Katayama M."/>
            <person name="Suzuki M."/>
            <person name="Aoki J."/>
            <person name="Arakawa T."/>
            <person name="Iida J."/>
            <person name="Imamura K."/>
            <person name="Itoh M."/>
            <person name="Kato T."/>
            <person name="Kawaji H."/>
            <person name="Kawagashira N."/>
            <person name="Kawashima T."/>
            <person name="Kojima M."/>
            <person name="Kondo S."/>
            <person name="Konno H."/>
            <person name="Nakano K."/>
            <person name="Ninomiya N."/>
            <person name="Nishio T."/>
            <person name="Okada M."/>
            <person name="Plessy C."/>
            <person name="Shibata K."/>
            <person name="Shiraki T."/>
            <person name="Suzuki S."/>
            <person name="Tagami M."/>
            <person name="Waki K."/>
            <person name="Watahiki A."/>
            <person name="Okamura-Oho Y."/>
            <person name="Suzuki H."/>
            <person name="Kawai J."/>
            <person name="Hayashizaki Y."/>
        </authorList>
    </citation>
    <scope>NUCLEOTIDE SEQUENCE [LARGE SCALE MRNA] OF 259-358</scope>
    <source>
        <strain>C57BL/6J</strain>
        <tissue>Thymus</tissue>
    </source>
</reference>
<reference key="5">
    <citation type="journal article" date="2002" name="Mol. Cell. Biol.">
        <title>Mouse Pop1 is required for muscle regeneration in adult skeletal muscle.</title>
        <authorList>
            <person name="Andree B."/>
            <person name="Fleige A."/>
            <person name="Arnold H.H."/>
            <person name="Brand T."/>
        </authorList>
    </citation>
    <scope>FUNCTION</scope>
    <scope>DISRUPTION PHENOTYPE</scope>
    <scope>TISSUE SPECIFICITY</scope>
    <scope>DEVELOPMENTAL STAGE</scope>
</reference>
<reference key="6">
    <citation type="journal article" date="2005" name="J. Cell Sci.">
        <title>Bves modulates epithelial integrity through an interaction at the tight junction.</title>
        <authorList>
            <person name="Osler M.E."/>
            <person name="Chang M.S."/>
            <person name="Bader D.M."/>
        </authorList>
    </citation>
    <scope>FUNCTION</scope>
    <scope>INTERACTION WITH TJP1</scope>
    <scope>SUBCELLULAR LOCATION</scope>
    <scope>TISSUE SPECIFICITY</scope>
</reference>
<reference key="7">
    <citation type="journal article" date="2008" name="Proc. Natl. Acad. Sci. U.S.A.">
        <title>Bves directly interacts with GEFT, and controls cell shape and movement through regulation of Rac1/Cdc42 activity.</title>
        <authorList>
            <person name="Smith T.K."/>
            <person name="Hager H.A."/>
            <person name="Francis R."/>
            <person name="Kilkenny D.M."/>
            <person name="Lo C.W."/>
            <person name="Bader D.M."/>
        </authorList>
    </citation>
    <scope>FUNCTION</scope>
    <scope>INTERACTION WITH ARHGEF25</scope>
    <scope>TISSUE SPECIFICITY</scope>
</reference>
<reference key="8">
    <citation type="journal article" date="2010" name="Cell">
        <title>A tissue-specific atlas of mouse protein phosphorylation and expression.</title>
        <authorList>
            <person name="Huttlin E.L."/>
            <person name="Jedrychowski M.P."/>
            <person name="Elias J.E."/>
            <person name="Goswami T."/>
            <person name="Rad R."/>
            <person name="Beausoleil S.A."/>
            <person name="Villen J."/>
            <person name="Haas W."/>
            <person name="Sowa M.E."/>
            <person name="Gygi S.P."/>
        </authorList>
    </citation>
    <scope>PHOSPHORYLATION [LARGE SCALE ANALYSIS] AT SER-295</scope>
    <scope>IDENTIFICATION BY MASS SPECTROMETRY [LARGE SCALE ANALYSIS]</scope>
    <source>
        <tissue>Heart</tissue>
    </source>
</reference>
<reference key="9">
    <citation type="journal article" date="2010" name="EMBO J.">
        <title>Identification of a novel Bves function: regulation of vesicular transport.</title>
        <authorList>
            <person name="Hager H.A."/>
            <person name="Roberts R.J."/>
            <person name="Cross E.E."/>
            <person name="Proux-Gillardeaux V."/>
            <person name="Bader D.M."/>
        </authorList>
    </citation>
    <scope>FUNCTION</scope>
    <scope>INTERACTION WITH VAMP3</scope>
    <scope>SUBCELLULAR LOCATION</scope>
</reference>
<reference key="10">
    <citation type="journal article" date="2012" name="J. Clin. Invest.">
        <title>Popeye domain containing proteins are essential for stress-mediated modulation of cardiac pacemaking in mice.</title>
        <authorList>
            <person name="Froese A."/>
            <person name="Breher S.S."/>
            <person name="Waldeyer C."/>
            <person name="Schindler R.F."/>
            <person name="Nikolaev V.O."/>
            <person name="Rinne S."/>
            <person name="Wischmeyer E."/>
            <person name="Schlueter J."/>
            <person name="Becher J."/>
            <person name="Simrick S."/>
            <person name="Vauti F."/>
            <person name="Kuhtz J."/>
            <person name="Meister P."/>
            <person name="Kreissl S."/>
            <person name="Torlopp A."/>
            <person name="Liebig S.K."/>
            <person name="Laakmann S."/>
            <person name="Mueller T.D."/>
            <person name="Neumann J."/>
            <person name="Stieber J."/>
            <person name="Ludwig A."/>
            <person name="Maier S.K."/>
            <person name="Decher N."/>
            <person name="Arnold H.H."/>
            <person name="Kirchhof P."/>
            <person name="Fabritz L."/>
            <person name="Brand T."/>
        </authorList>
    </citation>
    <scope>FUNCTION</scope>
    <scope>DISRUPTION PHENOTYPE</scope>
    <scope>CAMP-BINDING</scope>
    <scope>SUBCELLULAR LOCATION</scope>
    <scope>MUTAGENESIS OF ASP-200; PRO-202; GLU-203 AND VAL-217</scope>
</reference>
<reference key="11">
    <citation type="journal article" date="2013" name="PLoS ONE">
        <title>Popeye domain containing 1 (Popdc1/Bves) is a caveolae-associated protein involved in ischemia tolerance.</title>
        <authorList>
            <person name="Alcalay Y."/>
            <person name="Hochhauser E."/>
            <person name="Kliminski V."/>
            <person name="Dick J."/>
            <person name="Zahalka M.A."/>
            <person name="Parnes D."/>
            <person name="Schlesinger H."/>
            <person name="Abassi Z."/>
            <person name="Shainberg A."/>
            <person name="Schindler R.F."/>
            <person name="Brand T."/>
            <person name="Kessler-Icekson G."/>
        </authorList>
    </citation>
    <scope>FUNCTION</scope>
    <scope>DISRUPTION PHENOTYPE</scope>
    <scope>INTERACTION WITH CAV3</scope>
    <scope>SUBCELLULAR LOCATION</scope>
</reference>
<reference key="12">
    <citation type="journal article" date="2016" name="J. Clin. Invest.">
        <title>POPDC1S201F causes muscular dystrophy and arrhythmia by affecting protein trafficking.</title>
        <authorList>
            <person name="Schindler R.F."/>
            <person name="Scotton C."/>
            <person name="Zhang J."/>
            <person name="Passarelli C."/>
            <person name="Ortiz-Bonnin B."/>
            <person name="Simrick S."/>
            <person name="Schwerte T."/>
            <person name="Poon K.L."/>
            <person name="Fang M."/>
            <person name="Rinne S."/>
            <person name="Froese A."/>
            <person name="Nikolaev V.O."/>
            <person name="Grunert C."/>
            <person name="Mueller T."/>
            <person name="Tasca G."/>
            <person name="Sarathchandra P."/>
            <person name="Drago F."/>
            <person name="Dallapiccola B."/>
            <person name="Rapezzi C."/>
            <person name="Arbustini E."/>
            <person name="Di Raimo F.R."/>
            <person name="Neri M."/>
            <person name="Selvatici R."/>
            <person name="Gualandi F."/>
            <person name="Fattori F."/>
            <person name="Pietrangelo A."/>
            <person name="Li W."/>
            <person name="Jiang H."/>
            <person name="Xu X."/>
            <person name="Bertini E."/>
            <person name="Decher N."/>
            <person name="Wang J."/>
            <person name="Brand T."/>
            <person name="Ferlini A."/>
        </authorList>
    </citation>
    <scope>INTERACTION WITH KCNK2</scope>
</reference>
<organism>
    <name type="scientific">Mus musculus</name>
    <name type="common">Mouse</name>
    <dbReference type="NCBI Taxonomy" id="10090"/>
    <lineage>
        <taxon>Eukaryota</taxon>
        <taxon>Metazoa</taxon>
        <taxon>Chordata</taxon>
        <taxon>Craniata</taxon>
        <taxon>Vertebrata</taxon>
        <taxon>Euteleostomi</taxon>
        <taxon>Mammalia</taxon>
        <taxon>Eutheria</taxon>
        <taxon>Euarchontoglires</taxon>
        <taxon>Glires</taxon>
        <taxon>Rodentia</taxon>
        <taxon>Myomorpha</taxon>
        <taxon>Muroidea</taxon>
        <taxon>Muridae</taxon>
        <taxon>Murinae</taxon>
        <taxon>Mus</taxon>
        <taxon>Mus</taxon>
    </lineage>
</organism>
<evidence type="ECO:0000250" key="1">
    <source>
        <dbReference type="UniProtKB" id="Q3BCU4"/>
    </source>
</evidence>
<evidence type="ECO:0000250" key="2">
    <source>
        <dbReference type="UniProtKB" id="Q8NE79"/>
    </source>
</evidence>
<evidence type="ECO:0000250" key="3">
    <source>
        <dbReference type="UniProtKB" id="Q9DG23"/>
    </source>
</evidence>
<evidence type="ECO:0000255" key="4"/>
<evidence type="ECO:0000256" key="5">
    <source>
        <dbReference type="SAM" id="MobiDB-lite"/>
    </source>
</evidence>
<evidence type="ECO:0000269" key="6">
    <source>
    </source>
</evidence>
<evidence type="ECO:0000269" key="7">
    <source>
    </source>
</evidence>
<evidence type="ECO:0000269" key="8">
    <source>
    </source>
</evidence>
<evidence type="ECO:0000269" key="9">
    <source>
    </source>
</evidence>
<evidence type="ECO:0000269" key="10">
    <source>
    </source>
</evidence>
<evidence type="ECO:0000269" key="11">
    <source>
    </source>
</evidence>
<evidence type="ECO:0000269" key="12">
    <source>
    </source>
</evidence>
<evidence type="ECO:0000269" key="13">
    <source>
    </source>
</evidence>
<evidence type="ECO:0000305" key="14"/>
<evidence type="ECO:0000312" key="15">
    <source>
        <dbReference type="MGI" id="MGI:1346013"/>
    </source>
</evidence>
<evidence type="ECO:0007744" key="16">
    <source>
    </source>
</evidence>
<gene>
    <name evidence="15" type="primary">Popdc1</name>
    <name evidence="15" type="synonym">Bves</name>
    <name evidence="15" type="synonym">Pop1</name>
</gene>
<feature type="chain" id="PRO_0000046792" description="Popeye domain-containing protein 1">
    <location>
        <begin position="1"/>
        <end position="358"/>
    </location>
</feature>
<feature type="topological domain" description="Extracellular" evidence="4">
    <location>
        <begin position="1"/>
        <end position="48"/>
    </location>
</feature>
<feature type="transmembrane region" description="Helical" evidence="4">
    <location>
        <begin position="49"/>
        <end position="69"/>
    </location>
</feature>
<feature type="topological domain" description="Cytoplasmic" evidence="4">
    <location>
        <position position="70"/>
    </location>
</feature>
<feature type="transmembrane region" description="Helical" evidence="4">
    <location>
        <begin position="71"/>
        <end position="91"/>
    </location>
</feature>
<feature type="topological domain" description="Extracellular" evidence="4">
    <location>
        <position position="92"/>
    </location>
</feature>
<feature type="transmembrane region" description="Helical" evidence="4">
    <location>
        <begin position="93"/>
        <end position="113"/>
    </location>
</feature>
<feature type="topological domain" description="Cytoplasmic" evidence="4">
    <location>
        <begin position="114"/>
        <end position="358"/>
    </location>
</feature>
<feature type="region of interest" description="Required for interaction with CAV3" evidence="12">
    <location>
        <begin position="93"/>
        <end position="115"/>
    </location>
</feature>
<feature type="region of interest" description="Required for interaction with KCNK2" evidence="2">
    <location>
        <begin position="136"/>
        <end position="186"/>
    </location>
</feature>
<feature type="region of interest" description="Disordered" evidence="5">
    <location>
        <begin position="313"/>
        <end position="350"/>
    </location>
</feature>
<feature type="compositionally biased region" description="Low complexity" evidence="5">
    <location>
        <begin position="313"/>
        <end position="323"/>
    </location>
</feature>
<feature type="modified residue" description="Phosphoserine" evidence="16">
    <location>
        <position position="295"/>
    </location>
</feature>
<feature type="modified residue" description="Phosphoserine" evidence="1">
    <location>
        <position position="318"/>
    </location>
</feature>
<feature type="glycosylation site" description="N-linked (GlcNAc...) asparagine" evidence="4">
    <location>
        <position position="2"/>
    </location>
</feature>
<feature type="glycosylation site" description="N-linked (GlcNAc...) asparagine" evidence="4">
    <location>
        <position position="30"/>
    </location>
</feature>
<feature type="mutagenesis site" description="Almost abolishes cAMP-binding. Interaction with KCNK2 is not inhibited by cAMP." evidence="11">
    <original>D</original>
    <variation>A</variation>
    <location>
        <position position="200"/>
    </location>
</feature>
<feature type="mutagenesis site" description="No effect on cAMP-binding." evidence="11">
    <original>P</original>
    <variation>A</variation>
    <location>
        <position position="202"/>
    </location>
</feature>
<feature type="mutagenesis site" description="Decreases cAMP-binding." evidence="11">
    <original>E</original>
    <variation>A</variation>
    <location>
        <position position="203"/>
    </location>
</feature>
<feature type="mutagenesis site" description="Decreases cAMP-binding." evidence="11">
    <original>V</original>
    <variation>F</variation>
    <location>
        <position position="217"/>
    </location>
</feature>
<sequence length="358" mass="41016">MNSTESIPLAQSTVAGFTSELESLTPVPSNETTCENWREIHHLVFHVANVCFAVGLLIPTTLHLHMILLRVMLSLGCTLYVVWATLYRCALDVMIWNSVFLGINILHLSYLLYKKRPVKIEKELGGVYHRLFEPLRVPPDLFRRLTGQFCMIQTLKRGQVYATEDKTSVDDRLSILLKGRMKVSYRGHFLHNIYPCAFIDSPEFRSTQMHKGEKFQVTIVADDNCRFLCWSRERLTYFLESEPFLYEIFRYLIGKDITNKLYSLNDPTLNDKKVKKLEPQMSLCTQISMLEMRNSITSSSDGEDGLHHFLRGSSSTASLPMSSPQQRASAKMKPIEEGVEDDDEVFVSPDALKVHQLP</sequence>